<reference key="1">
    <citation type="journal article" date="2004" name="Nucleic Acids Res.">
        <title>Thermoadaptation trait revealed by the genome sequence of thermophilic Geobacillus kaustophilus.</title>
        <authorList>
            <person name="Takami H."/>
            <person name="Takaki Y."/>
            <person name="Chee G.-J."/>
            <person name="Nishi S."/>
            <person name="Shimamura S."/>
            <person name="Suzuki H."/>
            <person name="Matsui S."/>
            <person name="Uchiyama I."/>
        </authorList>
    </citation>
    <scope>NUCLEOTIDE SEQUENCE [LARGE SCALE GENOMIC DNA]</scope>
    <source>
        <strain>HTA426</strain>
    </source>
</reference>
<comment type="function">
    <text evidence="1">Located at the top of the head of the 30S subunit, it contacts several helices of the 16S rRNA. In the 70S ribosome it contacts the 23S rRNA (bridge B1a) and protein L5 of the 50S subunit (bridge B1b), connecting the 2 subunits; these bridges are implicated in subunit movement. Contacts the tRNAs in the A and P-sites.</text>
</comment>
<comment type="subunit">
    <text evidence="1">Part of the 30S ribosomal subunit. Forms a loose heterodimer with protein S19. Forms two bridges to the 50S subunit in the 70S ribosome.</text>
</comment>
<comment type="similarity">
    <text evidence="1">Belongs to the universal ribosomal protein uS13 family.</text>
</comment>
<dbReference type="EMBL" id="BA000043">
    <property type="protein sequence ID" value="BAD74416.1"/>
    <property type="molecule type" value="Genomic_DNA"/>
</dbReference>
<dbReference type="RefSeq" id="WP_008881920.1">
    <property type="nucleotide sequence ID" value="NC_006510.1"/>
</dbReference>
<dbReference type="SMR" id="Q5L3R4"/>
<dbReference type="STRING" id="235909.GK0131"/>
<dbReference type="GeneID" id="89612875"/>
<dbReference type="KEGG" id="gka:GK0131"/>
<dbReference type="eggNOG" id="COG0099">
    <property type="taxonomic scope" value="Bacteria"/>
</dbReference>
<dbReference type="HOGENOM" id="CLU_103849_1_1_9"/>
<dbReference type="Proteomes" id="UP000001172">
    <property type="component" value="Chromosome"/>
</dbReference>
<dbReference type="GO" id="GO:0005829">
    <property type="term" value="C:cytosol"/>
    <property type="evidence" value="ECO:0007669"/>
    <property type="project" value="TreeGrafter"/>
</dbReference>
<dbReference type="GO" id="GO:0015935">
    <property type="term" value="C:small ribosomal subunit"/>
    <property type="evidence" value="ECO:0007669"/>
    <property type="project" value="TreeGrafter"/>
</dbReference>
<dbReference type="GO" id="GO:0019843">
    <property type="term" value="F:rRNA binding"/>
    <property type="evidence" value="ECO:0007669"/>
    <property type="project" value="UniProtKB-UniRule"/>
</dbReference>
<dbReference type="GO" id="GO:0003735">
    <property type="term" value="F:structural constituent of ribosome"/>
    <property type="evidence" value="ECO:0007669"/>
    <property type="project" value="InterPro"/>
</dbReference>
<dbReference type="GO" id="GO:0000049">
    <property type="term" value="F:tRNA binding"/>
    <property type="evidence" value="ECO:0007669"/>
    <property type="project" value="UniProtKB-UniRule"/>
</dbReference>
<dbReference type="GO" id="GO:0006412">
    <property type="term" value="P:translation"/>
    <property type="evidence" value="ECO:0007669"/>
    <property type="project" value="UniProtKB-UniRule"/>
</dbReference>
<dbReference type="FunFam" id="1.10.8.50:FF:000001">
    <property type="entry name" value="30S ribosomal protein S13"/>
    <property type="match status" value="1"/>
</dbReference>
<dbReference type="FunFam" id="4.10.910.10:FF:000001">
    <property type="entry name" value="30S ribosomal protein S13"/>
    <property type="match status" value="1"/>
</dbReference>
<dbReference type="Gene3D" id="1.10.8.50">
    <property type="match status" value="1"/>
</dbReference>
<dbReference type="Gene3D" id="4.10.910.10">
    <property type="entry name" value="30s ribosomal protein s13, domain 2"/>
    <property type="match status" value="1"/>
</dbReference>
<dbReference type="HAMAP" id="MF_01315">
    <property type="entry name" value="Ribosomal_uS13"/>
    <property type="match status" value="1"/>
</dbReference>
<dbReference type="InterPro" id="IPR027437">
    <property type="entry name" value="Rbsml_uS13_C"/>
</dbReference>
<dbReference type="InterPro" id="IPR001892">
    <property type="entry name" value="Ribosomal_uS13"/>
</dbReference>
<dbReference type="InterPro" id="IPR010979">
    <property type="entry name" value="Ribosomal_uS13-like_H2TH"/>
</dbReference>
<dbReference type="InterPro" id="IPR019980">
    <property type="entry name" value="Ribosomal_uS13_bac-type"/>
</dbReference>
<dbReference type="InterPro" id="IPR018269">
    <property type="entry name" value="Ribosomal_uS13_CS"/>
</dbReference>
<dbReference type="NCBIfam" id="TIGR03631">
    <property type="entry name" value="uS13_bact"/>
    <property type="match status" value="1"/>
</dbReference>
<dbReference type="PANTHER" id="PTHR10871">
    <property type="entry name" value="30S RIBOSOMAL PROTEIN S13/40S RIBOSOMAL PROTEIN S18"/>
    <property type="match status" value="1"/>
</dbReference>
<dbReference type="PANTHER" id="PTHR10871:SF1">
    <property type="entry name" value="SMALL RIBOSOMAL SUBUNIT PROTEIN US13M"/>
    <property type="match status" value="1"/>
</dbReference>
<dbReference type="Pfam" id="PF00416">
    <property type="entry name" value="Ribosomal_S13"/>
    <property type="match status" value="1"/>
</dbReference>
<dbReference type="PIRSF" id="PIRSF002134">
    <property type="entry name" value="Ribosomal_S13"/>
    <property type="match status" value="1"/>
</dbReference>
<dbReference type="SUPFAM" id="SSF46946">
    <property type="entry name" value="S13-like H2TH domain"/>
    <property type="match status" value="1"/>
</dbReference>
<dbReference type="PROSITE" id="PS00646">
    <property type="entry name" value="RIBOSOMAL_S13_1"/>
    <property type="match status" value="1"/>
</dbReference>
<dbReference type="PROSITE" id="PS50159">
    <property type="entry name" value="RIBOSOMAL_S13_2"/>
    <property type="match status" value="1"/>
</dbReference>
<keyword id="KW-1185">Reference proteome</keyword>
<keyword id="KW-0687">Ribonucleoprotein</keyword>
<keyword id="KW-0689">Ribosomal protein</keyword>
<keyword id="KW-0694">RNA-binding</keyword>
<keyword id="KW-0699">rRNA-binding</keyword>
<keyword id="KW-0820">tRNA-binding</keyword>
<feature type="chain" id="PRO_0000230508" description="Small ribosomal subunit protein uS13">
    <location>
        <begin position="1"/>
        <end position="121"/>
    </location>
</feature>
<feature type="region of interest" description="Disordered" evidence="2">
    <location>
        <begin position="94"/>
        <end position="121"/>
    </location>
</feature>
<feature type="compositionally biased region" description="Basic residues" evidence="2">
    <location>
        <begin position="106"/>
        <end position="121"/>
    </location>
</feature>
<protein>
    <recommendedName>
        <fullName evidence="1">Small ribosomal subunit protein uS13</fullName>
    </recommendedName>
    <alternativeName>
        <fullName evidence="3">30S ribosomal protein S13</fullName>
    </alternativeName>
</protein>
<accession>Q5L3R4</accession>
<gene>
    <name evidence="1" type="primary">rpsM</name>
    <name type="ordered locus">GK0131</name>
</gene>
<evidence type="ECO:0000255" key="1">
    <source>
        <dbReference type="HAMAP-Rule" id="MF_01315"/>
    </source>
</evidence>
<evidence type="ECO:0000256" key="2">
    <source>
        <dbReference type="SAM" id="MobiDB-lite"/>
    </source>
</evidence>
<evidence type="ECO:0000305" key="3"/>
<proteinExistence type="inferred from homology"/>
<organism>
    <name type="scientific">Geobacillus kaustophilus (strain HTA426)</name>
    <dbReference type="NCBI Taxonomy" id="235909"/>
    <lineage>
        <taxon>Bacteria</taxon>
        <taxon>Bacillati</taxon>
        <taxon>Bacillota</taxon>
        <taxon>Bacilli</taxon>
        <taxon>Bacillales</taxon>
        <taxon>Anoxybacillaceae</taxon>
        <taxon>Geobacillus</taxon>
        <taxon>Geobacillus thermoleovorans group</taxon>
    </lineage>
</organism>
<sequence>MARIAGVDIPRDKRVVISLTYIYGIGKPTAQKILKEAGVSEDTRVRDLTEEELGRIREIVGRLKVEGDLRREVSLNIKRLMEIGCYRGLRHRRGLPVRGQNTKNNARTRKGPRRTVANKKK</sequence>
<name>RS13_GEOKA</name>